<accession>Q8D1X5</accession>
<gene>
    <name evidence="1" type="primary">trpS</name>
    <name type="ordered locus">WIGBR5810</name>
</gene>
<organism>
    <name type="scientific">Wigglesworthia glossinidia brevipalpis</name>
    <dbReference type="NCBI Taxonomy" id="36870"/>
    <lineage>
        <taxon>Bacteria</taxon>
        <taxon>Pseudomonadati</taxon>
        <taxon>Pseudomonadota</taxon>
        <taxon>Gammaproteobacteria</taxon>
        <taxon>Enterobacterales</taxon>
        <taxon>Erwiniaceae</taxon>
        <taxon>Wigglesworthia</taxon>
    </lineage>
</organism>
<evidence type="ECO:0000255" key="1">
    <source>
        <dbReference type="HAMAP-Rule" id="MF_00140"/>
    </source>
</evidence>
<name>SYW_WIGBR</name>
<protein>
    <recommendedName>
        <fullName evidence="1">Tryptophan--tRNA ligase</fullName>
        <ecNumber evidence="1">6.1.1.2</ecNumber>
    </recommendedName>
    <alternativeName>
        <fullName evidence="1">Tryptophanyl-tRNA synthetase</fullName>
        <shortName evidence="1">TrpRS</shortName>
    </alternativeName>
</protein>
<proteinExistence type="inferred from homology"/>
<feature type="chain" id="PRO_0000136710" description="Tryptophan--tRNA ligase">
    <location>
        <begin position="1"/>
        <end position="334"/>
    </location>
</feature>
<feature type="short sequence motif" description="'HIGH' region" evidence="1">
    <location>
        <begin position="13"/>
        <end position="21"/>
    </location>
</feature>
<feature type="short sequence motif" description="'KMSKS' region" evidence="1">
    <location>
        <begin position="196"/>
        <end position="200"/>
    </location>
</feature>
<feature type="binding site" evidence="1">
    <location>
        <begin position="12"/>
        <end position="14"/>
    </location>
    <ligand>
        <name>ATP</name>
        <dbReference type="ChEBI" id="CHEBI:30616"/>
    </ligand>
</feature>
<feature type="binding site" evidence="1">
    <location>
        <begin position="20"/>
        <end position="21"/>
    </location>
    <ligand>
        <name>ATP</name>
        <dbReference type="ChEBI" id="CHEBI:30616"/>
    </ligand>
</feature>
<feature type="binding site" evidence="1">
    <location>
        <position position="136"/>
    </location>
    <ligand>
        <name>L-tryptophan</name>
        <dbReference type="ChEBI" id="CHEBI:57912"/>
    </ligand>
</feature>
<feature type="binding site" evidence="1">
    <location>
        <begin position="148"/>
        <end position="150"/>
    </location>
    <ligand>
        <name>ATP</name>
        <dbReference type="ChEBI" id="CHEBI:30616"/>
    </ligand>
</feature>
<feature type="binding site" evidence="1">
    <location>
        <position position="187"/>
    </location>
    <ligand>
        <name>ATP</name>
        <dbReference type="ChEBI" id="CHEBI:30616"/>
    </ligand>
</feature>
<feature type="binding site" evidence="1">
    <location>
        <begin position="196"/>
        <end position="200"/>
    </location>
    <ligand>
        <name>ATP</name>
        <dbReference type="ChEBI" id="CHEBI:30616"/>
    </ligand>
</feature>
<comment type="function">
    <text evidence="1">Catalyzes the attachment of tryptophan to tRNA(Trp).</text>
</comment>
<comment type="catalytic activity">
    <reaction evidence="1">
        <text>tRNA(Trp) + L-tryptophan + ATP = L-tryptophyl-tRNA(Trp) + AMP + diphosphate + H(+)</text>
        <dbReference type="Rhea" id="RHEA:24080"/>
        <dbReference type="Rhea" id="RHEA-COMP:9671"/>
        <dbReference type="Rhea" id="RHEA-COMP:9705"/>
        <dbReference type="ChEBI" id="CHEBI:15378"/>
        <dbReference type="ChEBI" id="CHEBI:30616"/>
        <dbReference type="ChEBI" id="CHEBI:33019"/>
        <dbReference type="ChEBI" id="CHEBI:57912"/>
        <dbReference type="ChEBI" id="CHEBI:78442"/>
        <dbReference type="ChEBI" id="CHEBI:78535"/>
        <dbReference type="ChEBI" id="CHEBI:456215"/>
        <dbReference type="EC" id="6.1.1.2"/>
    </reaction>
</comment>
<comment type="subunit">
    <text evidence="1">Homodimer.</text>
</comment>
<comment type="subcellular location">
    <subcellularLocation>
        <location evidence="1">Cytoplasm</location>
    </subcellularLocation>
</comment>
<comment type="similarity">
    <text evidence="1">Belongs to the class-I aminoacyl-tRNA synthetase family.</text>
</comment>
<reference key="1">
    <citation type="journal article" date="2002" name="Nat. Genet.">
        <title>Genome sequence of the endocellular obligate symbiont of tsetse flies, Wigglesworthia glossinidia.</title>
        <authorList>
            <person name="Akman L."/>
            <person name="Yamashita A."/>
            <person name="Watanabe H."/>
            <person name="Oshima K."/>
            <person name="Shiba T."/>
            <person name="Hattori M."/>
            <person name="Aksoy S."/>
        </authorList>
    </citation>
    <scope>NUCLEOTIDE SEQUENCE [LARGE SCALE GENOMIC DNA]</scope>
</reference>
<keyword id="KW-0030">Aminoacyl-tRNA synthetase</keyword>
<keyword id="KW-0067">ATP-binding</keyword>
<keyword id="KW-0963">Cytoplasm</keyword>
<keyword id="KW-0436">Ligase</keyword>
<keyword id="KW-0547">Nucleotide-binding</keyword>
<keyword id="KW-0648">Protein biosynthesis</keyword>
<keyword id="KW-1185">Reference proteome</keyword>
<sequence length="334" mass="38377">MIKKLNIFSGMQPSGIPTLGNYIGVLRQWKILQKIYNSIYCIADLHYLTNNKENSKILFKRSLDLLAIYLACDIDPNESVIFLQSHIPEHSQLSWILNCYTYFGELTRMVQFKEKIKNKKNINLGLLSYPVLMASDILLYQTDIVPVGKDQIQHLELSRTIARRFNKLHGDVFIIPEKIISKTGSKIMSLSNPNKKMSKSNLNRNNFISLLDQPYSIIEKIKNAKTDSDNPPKINFDIIKKPGISNLLSIISELRGINIKDLEISFKNKSYKYLKNEVTGAVLEHLKILQKKYFLIRKDEKYLINILKSGSKKAKKIARGTLKKVNESIGLLNF</sequence>
<dbReference type="EC" id="6.1.1.2" evidence="1"/>
<dbReference type="EMBL" id="BA000021">
    <property type="protein sequence ID" value="BAC24727.1"/>
    <property type="molecule type" value="Genomic_DNA"/>
</dbReference>
<dbReference type="SMR" id="Q8D1X5"/>
<dbReference type="STRING" id="36870.gene:10369090"/>
<dbReference type="KEGG" id="wbr:trpS"/>
<dbReference type="eggNOG" id="COG0180">
    <property type="taxonomic scope" value="Bacteria"/>
</dbReference>
<dbReference type="HOGENOM" id="CLU_029244_1_1_6"/>
<dbReference type="OrthoDB" id="9801042at2"/>
<dbReference type="Proteomes" id="UP000000562">
    <property type="component" value="Chromosome"/>
</dbReference>
<dbReference type="GO" id="GO:0005829">
    <property type="term" value="C:cytosol"/>
    <property type="evidence" value="ECO:0007669"/>
    <property type="project" value="TreeGrafter"/>
</dbReference>
<dbReference type="GO" id="GO:0005524">
    <property type="term" value="F:ATP binding"/>
    <property type="evidence" value="ECO:0007669"/>
    <property type="project" value="UniProtKB-UniRule"/>
</dbReference>
<dbReference type="GO" id="GO:0004830">
    <property type="term" value="F:tryptophan-tRNA ligase activity"/>
    <property type="evidence" value="ECO:0007669"/>
    <property type="project" value="UniProtKB-UniRule"/>
</dbReference>
<dbReference type="GO" id="GO:0006436">
    <property type="term" value="P:tryptophanyl-tRNA aminoacylation"/>
    <property type="evidence" value="ECO:0007669"/>
    <property type="project" value="UniProtKB-UniRule"/>
</dbReference>
<dbReference type="CDD" id="cd00806">
    <property type="entry name" value="TrpRS_core"/>
    <property type="match status" value="1"/>
</dbReference>
<dbReference type="FunFam" id="1.10.240.10:FF:000002">
    <property type="entry name" value="Tryptophan--tRNA ligase"/>
    <property type="match status" value="1"/>
</dbReference>
<dbReference type="Gene3D" id="3.40.50.620">
    <property type="entry name" value="HUPs"/>
    <property type="match status" value="1"/>
</dbReference>
<dbReference type="Gene3D" id="1.10.240.10">
    <property type="entry name" value="Tyrosyl-Transfer RNA Synthetase"/>
    <property type="match status" value="1"/>
</dbReference>
<dbReference type="HAMAP" id="MF_00140_B">
    <property type="entry name" value="Trp_tRNA_synth_B"/>
    <property type="match status" value="1"/>
</dbReference>
<dbReference type="InterPro" id="IPR001412">
    <property type="entry name" value="aa-tRNA-synth_I_CS"/>
</dbReference>
<dbReference type="InterPro" id="IPR002305">
    <property type="entry name" value="aa-tRNA-synth_Ic"/>
</dbReference>
<dbReference type="InterPro" id="IPR014729">
    <property type="entry name" value="Rossmann-like_a/b/a_fold"/>
</dbReference>
<dbReference type="InterPro" id="IPR002306">
    <property type="entry name" value="Trp-tRNA-ligase"/>
</dbReference>
<dbReference type="InterPro" id="IPR024109">
    <property type="entry name" value="Trp-tRNA-ligase_bac-type"/>
</dbReference>
<dbReference type="InterPro" id="IPR050203">
    <property type="entry name" value="Trp-tRNA_synthetase"/>
</dbReference>
<dbReference type="NCBIfam" id="TIGR00233">
    <property type="entry name" value="trpS"/>
    <property type="match status" value="1"/>
</dbReference>
<dbReference type="PANTHER" id="PTHR43766">
    <property type="entry name" value="TRYPTOPHAN--TRNA LIGASE, MITOCHONDRIAL"/>
    <property type="match status" value="1"/>
</dbReference>
<dbReference type="PANTHER" id="PTHR43766:SF1">
    <property type="entry name" value="TRYPTOPHAN--TRNA LIGASE, MITOCHONDRIAL"/>
    <property type="match status" value="1"/>
</dbReference>
<dbReference type="Pfam" id="PF00579">
    <property type="entry name" value="tRNA-synt_1b"/>
    <property type="match status" value="1"/>
</dbReference>
<dbReference type="PRINTS" id="PR01039">
    <property type="entry name" value="TRNASYNTHTRP"/>
</dbReference>
<dbReference type="SUPFAM" id="SSF52374">
    <property type="entry name" value="Nucleotidylyl transferase"/>
    <property type="match status" value="1"/>
</dbReference>
<dbReference type="PROSITE" id="PS00178">
    <property type="entry name" value="AA_TRNA_LIGASE_I"/>
    <property type="match status" value="1"/>
</dbReference>